<evidence type="ECO:0000250" key="1"/>
<evidence type="ECO:0000255" key="2"/>
<evidence type="ECO:0000256" key="3">
    <source>
        <dbReference type="SAM" id="MobiDB-lite"/>
    </source>
</evidence>
<evidence type="ECO:0000305" key="4"/>
<sequence>MGLCKCPKRKVTNLFCFEHRVNVCEHCLVANHAKCIVQSYLQWLQDSDYNPNCRLCNIPLAARETTRLICYDLFHWACLNERAAQLPRNTAPAGYQCPSCSGPIFPPTNLAGPVASALREKLATVNWARAGLGLPLIDELVSPEPEPLNTSEFSDWSSFNASGSPEQEETASASAAPAFYSQVPRPPASPSRPEQHTVIHMGNPEPLTHASAPRKVYDTRDDERAPGLHRDCDDDKYRRRPALGWLAQLLRSRAGSRKRPLTLLQRAGLLLLLGLLGFLALLALMSRLGRAAADSDPNLDPLMNPHIRVGPS</sequence>
<feature type="chain" id="PRO_0000342147" description="Zinc finger protein-like 1">
    <location>
        <begin position="1"/>
        <end position="312"/>
    </location>
</feature>
<feature type="topological domain" description="Cytoplasmic" evidence="2">
    <location>
        <begin position="1"/>
        <end position="268"/>
    </location>
</feature>
<feature type="transmembrane region" description="Helical" evidence="2">
    <location>
        <begin position="269"/>
        <end position="289"/>
    </location>
</feature>
<feature type="topological domain" description="Lumenal" evidence="2">
    <location>
        <begin position="290"/>
        <end position="312"/>
    </location>
</feature>
<feature type="zinc finger region" description="B box-type; degenerate">
    <location>
        <begin position="1"/>
        <end position="43"/>
    </location>
</feature>
<feature type="zinc finger region" description="RING-type; degenerate">
    <location>
        <begin position="53"/>
        <end position="101"/>
    </location>
</feature>
<feature type="region of interest" description="Disordered" evidence="3">
    <location>
        <begin position="144"/>
        <end position="233"/>
    </location>
</feature>
<feature type="compositionally biased region" description="Polar residues" evidence="3">
    <location>
        <begin position="148"/>
        <end position="173"/>
    </location>
</feature>
<feature type="compositionally biased region" description="Basic and acidic residues" evidence="3">
    <location>
        <begin position="215"/>
        <end position="233"/>
    </location>
</feature>
<name>ZFPL1_BOVIN</name>
<proteinExistence type="evidence at transcript level"/>
<gene>
    <name type="primary">ZFPL1</name>
</gene>
<reference key="1">
    <citation type="submission" date="2005-11" db="EMBL/GenBank/DDBJ databases">
        <authorList>
            <consortium name="NIH - Mammalian Gene Collection (MGC) project"/>
        </authorList>
    </citation>
    <scope>NUCLEOTIDE SEQUENCE [LARGE SCALE MRNA]</scope>
    <source>
        <strain>Crossbred X Angus</strain>
        <tissue>Liver</tissue>
    </source>
</reference>
<reference key="2">
    <citation type="journal article" date="2005" name="BMC Genomics">
        <title>Characterization of 954 bovine full-CDS cDNA sequences.</title>
        <authorList>
            <person name="Harhay G.P."/>
            <person name="Sonstegard T.S."/>
            <person name="Keele J.W."/>
            <person name="Heaton M.P."/>
            <person name="Clawson M.L."/>
            <person name="Snelling W.M."/>
            <person name="Wiedmann R.T."/>
            <person name="Van Tassell C.P."/>
            <person name="Smith T.P.L."/>
        </authorList>
    </citation>
    <scope>NUCLEOTIDE SEQUENCE [LARGE SCALE MRNA] OF 1-257</scope>
</reference>
<organism>
    <name type="scientific">Bos taurus</name>
    <name type="common">Bovine</name>
    <dbReference type="NCBI Taxonomy" id="9913"/>
    <lineage>
        <taxon>Eukaryota</taxon>
        <taxon>Metazoa</taxon>
        <taxon>Chordata</taxon>
        <taxon>Craniata</taxon>
        <taxon>Vertebrata</taxon>
        <taxon>Euteleostomi</taxon>
        <taxon>Mammalia</taxon>
        <taxon>Eutheria</taxon>
        <taxon>Laurasiatheria</taxon>
        <taxon>Artiodactyla</taxon>
        <taxon>Ruminantia</taxon>
        <taxon>Pecora</taxon>
        <taxon>Bovidae</taxon>
        <taxon>Bovinae</taxon>
        <taxon>Bos</taxon>
    </lineage>
</organism>
<dbReference type="EMBL" id="BC110275">
    <property type="protein sequence ID" value="AAI10276.1"/>
    <property type="molecule type" value="mRNA"/>
</dbReference>
<dbReference type="EMBL" id="BT025470">
    <property type="protein sequence ID" value="ABF57426.1"/>
    <property type="molecule type" value="mRNA"/>
</dbReference>
<dbReference type="RefSeq" id="NP_001069740.1">
    <property type="nucleotide sequence ID" value="NM_001076272.1"/>
</dbReference>
<dbReference type="RefSeq" id="XP_010819442.1">
    <property type="nucleotide sequence ID" value="XM_010821140.2"/>
</dbReference>
<dbReference type="RefSeq" id="XP_024843049.1">
    <property type="nucleotide sequence ID" value="XM_024987281.2"/>
</dbReference>
<dbReference type="RefSeq" id="XP_024843050.1">
    <property type="nucleotide sequence ID" value="XM_024987282.2"/>
</dbReference>
<dbReference type="RefSeq" id="XP_024843051.1">
    <property type="nucleotide sequence ID" value="XM_024987283.2"/>
</dbReference>
<dbReference type="FunCoup" id="Q2YDD3">
    <property type="interactions" value="4086"/>
</dbReference>
<dbReference type="STRING" id="9913.ENSBTAP00000020585"/>
<dbReference type="PaxDb" id="9913-ENSBTAP00000020585"/>
<dbReference type="Ensembl" id="ENSBTAT00000020585.5">
    <property type="protein sequence ID" value="ENSBTAP00000020585.5"/>
    <property type="gene ID" value="ENSBTAG00000015479.6"/>
</dbReference>
<dbReference type="GeneID" id="613442"/>
<dbReference type="KEGG" id="bta:613442"/>
<dbReference type="CTD" id="7542"/>
<dbReference type="VEuPathDB" id="HostDB:ENSBTAG00000015479"/>
<dbReference type="VGNC" id="VGNC:37170">
    <property type="gene designation" value="ZFPL1"/>
</dbReference>
<dbReference type="eggNOG" id="KOG3970">
    <property type="taxonomic scope" value="Eukaryota"/>
</dbReference>
<dbReference type="GeneTree" id="ENSGT00390000009753"/>
<dbReference type="InParanoid" id="Q2YDD3"/>
<dbReference type="OMA" id="CEHCMVA"/>
<dbReference type="OrthoDB" id="1916590at2759"/>
<dbReference type="Proteomes" id="UP000009136">
    <property type="component" value="Chromosome 29"/>
</dbReference>
<dbReference type="GO" id="GO:0005794">
    <property type="term" value="C:Golgi apparatus"/>
    <property type="evidence" value="ECO:0000318"/>
    <property type="project" value="GO_Central"/>
</dbReference>
<dbReference type="GO" id="GO:0016020">
    <property type="term" value="C:membrane"/>
    <property type="evidence" value="ECO:0007669"/>
    <property type="project" value="UniProtKB-KW"/>
</dbReference>
<dbReference type="GO" id="GO:0008270">
    <property type="term" value="F:zinc ion binding"/>
    <property type="evidence" value="ECO:0007669"/>
    <property type="project" value="UniProtKB-KW"/>
</dbReference>
<dbReference type="GO" id="GO:0016192">
    <property type="term" value="P:vesicle-mediated transport"/>
    <property type="evidence" value="ECO:0007669"/>
    <property type="project" value="UniProtKB-KW"/>
</dbReference>
<dbReference type="CDD" id="cd16487">
    <property type="entry name" value="mRING-H2-C3DHC3_ZFPL1"/>
    <property type="match status" value="1"/>
</dbReference>
<dbReference type="InterPro" id="IPR039043">
    <property type="entry name" value="ZFPL1"/>
</dbReference>
<dbReference type="PANTHER" id="PTHR12981">
    <property type="entry name" value="ZINC FINGER PROTEIN-LIKE 1"/>
    <property type="match status" value="1"/>
</dbReference>
<dbReference type="PANTHER" id="PTHR12981:SF0">
    <property type="entry name" value="ZINC FINGER PROTEIN-LIKE 1"/>
    <property type="match status" value="1"/>
</dbReference>
<protein>
    <recommendedName>
        <fullName>Zinc finger protein-like 1</fullName>
    </recommendedName>
</protein>
<accession>Q2YDD3</accession>
<accession>Q1JP84</accession>
<comment type="function">
    <text evidence="1">Required for cis-Golgi integrity and efficient ER to Golgi transport. Involved in the maintenance of the integrity of the cis-Golgi, possibly via its interaction with GOLGA2/GM130 (By similarity).</text>
</comment>
<comment type="subunit">
    <text evidence="1">Interacts with GOLGA2/GM130.</text>
</comment>
<comment type="subcellular location">
    <subcellularLocation>
        <location evidence="1">Golgi apparatus</location>
        <location evidence="1">cis-Golgi network membrane</location>
        <topology evidence="1">Single-pass membrane protein</topology>
    </subcellularLocation>
</comment>
<comment type="domain">
    <text evidence="1">The B box-type and RING-type zinc fingers although degenerate play a central role in function of the protein.</text>
</comment>
<comment type="PTM">
    <text evidence="1">Phosphorylated.</text>
</comment>
<comment type="similarity">
    <text evidence="4">Belongs to the ZFPL1 family.</text>
</comment>
<keyword id="KW-0931">ER-Golgi transport</keyword>
<keyword id="KW-0333">Golgi apparatus</keyword>
<keyword id="KW-0472">Membrane</keyword>
<keyword id="KW-0479">Metal-binding</keyword>
<keyword id="KW-0597">Phosphoprotein</keyword>
<keyword id="KW-1185">Reference proteome</keyword>
<keyword id="KW-0812">Transmembrane</keyword>
<keyword id="KW-1133">Transmembrane helix</keyword>
<keyword id="KW-0813">Transport</keyword>
<keyword id="KW-0862">Zinc</keyword>
<keyword id="KW-0863">Zinc-finger</keyword>